<comment type="function">
    <text evidence="1">Acts as a chaperone.</text>
</comment>
<comment type="induction">
    <text evidence="1">By stress conditions e.g. heat shock.</text>
</comment>
<comment type="similarity">
    <text evidence="1">Belongs to the heat shock protein 70 family.</text>
</comment>
<accession>Q2SYZ4</accession>
<keyword id="KW-0067">ATP-binding</keyword>
<keyword id="KW-0143">Chaperone</keyword>
<keyword id="KW-0547">Nucleotide-binding</keyword>
<keyword id="KW-0597">Phosphoprotein</keyword>
<keyword id="KW-0346">Stress response</keyword>
<evidence type="ECO:0000255" key="1">
    <source>
        <dbReference type="HAMAP-Rule" id="MF_00332"/>
    </source>
</evidence>
<evidence type="ECO:0000256" key="2">
    <source>
        <dbReference type="SAM" id="MobiDB-lite"/>
    </source>
</evidence>
<organism>
    <name type="scientific">Burkholderia thailandensis (strain ATCC 700388 / DSM 13276 / CCUG 48851 / CIP 106301 / E264)</name>
    <dbReference type="NCBI Taxonomy" id="271848"/>
    <lineage>
        <taxon>Bacteria</taxon>
        <taxon>Pseudomonadati</taxon>
        <taxon>Pseudomonadota</taxon>
        <taxon>Betaproteobacteria</taxon>
        <taxon>Burkholderiales</taxon>
        <taxon>Burkholderiaceae</taxon>
        <taxon>Burkholderia</taxon>
        <taxon>pseudomallei group</taxon>
    </lineage>
</organism>
<sequence length="650" mass="69748">MGKIIGIDLGTTNSCVAIMEGNQVKVIENSEGARTTPSIIAYMDDNEVLVGAPAKRQSVTNPKNTLFAVKRLIGRRFEEKEVQKDIGLMPYSIIKADNGDAWVEAHGEKLAPPQVSAEVLRKMKKTAEDYLGEPVTEAVITVPAYFNDSQRQATKDAGRIAGLEVKRIINEPTAAALAFGLDKAEKGDRKIAVYDLGGGTFDVSIIEIADVDGEKQFEVLSTNGDTFLGGEDFDQRIIDYIIGEFKKEQGVDLSKDVLALQRLKEAAEKAKIELSSGQQTEINLPYITADASGPKHLNLKITRAKLEALVEDLVERTIEPCRIAIKDAGVKVSDIDDVILVGGQTRMPKVMEKVKEFFGKDPRRDVNPDEAVAVGAAIQGQVLSGDRKDVLLLDVTPLSLGIETLGGVMTKMINKNTTIPTKHSQVYSTADDNQGAVTIKVFQGEREMAAGNKLLGEFNLEGIPPAPRGVPQIEVTFDIDANGILHVGAKDKATGKENKITIKANSGLSEAEIEKMVKDAEANAAEDHKLRELAESRNQGDALVHSTKKALTEYGDKLEAGEKEKIEAALKELEDVLKNASSDKAAIDAKIETVATASQKLGEKMYADMQAQQAGAAGAAGAAAAEGAAQGGAQTADDVVDADFKEVKKD</sequence>
<dbReference type="EMBL" id="CP000086">
    <property type="protein sequence ID" value="ABC38897.1"/>
    <property type="molecule type" value="Genomic_DNA"/>
</dbReference>
<dbReference type="RefSeq" id="WP_009889255.1">
    <property type="nucleotide sequence ID" value="NZ_CP008785.1"/>
</dbReference>
<dbReference type="SMR" id="Q2SYZ4"/>
<dbReference type="GeneID" id="45121052"/>
<dbReference type="KEGG" id="bte:BTH_I1308"/>
<dbReference type="HOGENOM" id="CLU_005965_2_1_4"/>
<dbReference type="Proteomes" id="UP000001930">
    <property type="component" value="Chromosome I"/>
</dbReference>
<dbReference type="GO" id="GO:0005524">
    <property type="term" value="F:ATP binding"/>
    <property type="evidence" value="ECO:0007669"/>
    <property type="project" value="UniProtKB-UniRule"/>
</dbReference>
<dbReference type="GO" id="GO:0140662">
    <property type="term" value="F:ATP-dependent protein folding chaperone"/>
    <property type="evidence" value="ECO:0007669"/>
    <property type="project" value="InterPro"/>
</dbReference>
<dbReference type="GO" id="GO:0051082">
    <property type="term" value="F:unfolded protein binding"/>
    <property type="evidence" value="ECO:0007669"/>
    <property type="project" value="InterPro"/>
</dbReference>
<dbReference type="CDD" id="cd10234">
    <property type="entry name" value="ASKHA_NBD_HSP70_DnaK-like"/>
    <property type="match status" value="1"/>
</dbReference>
<dbReference type="FunFam" id="2.60.34.10:FF:000014">
    <property type="entry name" value="Chaperone protein DnaK HSP70"/>
    <property type="match status" value="1"/>
</dbReference>
<dbReference type="FunFam" id="3.30.30.30:FF:000003">
    <property type="entry name" value="Heat shock protein 9"/>
    <property type="match status" value="1"/>
</dbReference>
<dbReference type="FunFam" id="1.20.1270.10:FF:000001">
    <property type="entry name" value="Molecular chaperone DnaK"/>
    <property type="match status" value="1"/>
</dbReference>
<dbReference type="FunFam" id="3.30.420.40:FF:000004">
    <property type="entry name" value="Molecular chaperone DnaK"/>
    <property type="match status" value="1"/>
</dbReference>
<dbReference type="FunFam" id="3.90.640.10:FF:000003">
    <property type="entry name" value="Molecular chaperone DnaK"/>
    <property type="match status" value="1"/>
</dbReference>
<dbReference type="Gene3D" id="1.20.1270.10">
    <property type="match status" value="1"/>
</dbReference>
<dbReference type="Gene3D" id="3.30.420.40">
    <property type="match status" value="2"/>
</dbReference>
<dbReference type="Gene3D" id="3.90.640.10">
    <property type="entry name" value="Actin, Chain A, domain 4"/>
    <property type="match status" value="1"/>
</dbReference>
<dbReference type="Gene3D" id="2.60.34.10">
    <property type="entry name" value="Substrate Binding Domain Of DNAk, Chain A, domain 1"/>
    <property type="match status" value="1"/>
</dbReference>
<dbReference type="HAMAP" id="MF_00332">
    <property type="entry name" value="DnaK"/>
    <property type="match status" value="1"/>
</dbReference>
<dbReference type="InterPro" id="IPR043129">
    <property type="entry name" value="ATPase_NBD"/>
</dbReference>
<dbReference type="InterPro" id="IPR012725">
    <property type="entry name" value="Chaperone_DnaK"/>
</dbReference>
<dbReference type="InterPro" id="IPR018181">
    <property type="entry name" value="Heat_shock_70_CS"/>
</dbReference>
<dbReference type="InterPro" id="IPR029048">
    <property type="entry name" value="HSP70_C_sf"/>
</dbReference>
<dbReference type="InterPro" id="IPR029047">
    <property type="entry name" value="HSP70_peptide-bd_sf"/>
</dbReference>
<dbReference type="InterPro" id="IPR013126">
    <property type="entry name" value="Hsp_70_fam"/>
</dbReference>
<dbReference type="NCBIfam" id="NF001413">
    <property type="entry name" value="PRK00290.1"/>
    <property type="match status" value="1"/>
</dbReference>
<dbReference type="NCBIfam" id="NF003520">
    <property type="entry name" value="PRK05183.1"/>
    <property type="match status" value="1"/>
</dbReference>
<dbReference type="NCBIfam" id="TIGR02350">
    <property type="entry name" value="prok_dnaK"/>
    <property type="match status" value="1"/>
</dbReference>
<dbReference type="PANTHER" id="PTHR19375">
    <property type="entry name" value="HEAT SHOCK PROTEIN 70KDA"/>
    <property type="match status" value="1"/>
</dbReference>
<dbReference type="Pfam" id="PF00012">
    <property type="entry name" value="HSP70"/>
    <property type="match status" value="1"/>
</dbReference>
<dbReference type="PRINTS" id="PR00301">
    <property type="entry name" value="HEATSHOCK70"/>
</dbReference>
<dbReference type="SUPFAM" id="SSF53067">
    <property type="entry name" value="Actin-like ATPase domain"/>
    <property type="match status" value="2"/>
</dbReference>
<dbReference type="SUPFAM" id="SSF100934">
    <property type="entry name" value="Heat shock protein 70kD (HSP70), C-terminal subdomain"/>
    <property type="match status" value="1"/>
</dbReference>
<dbReference type="SUPFAM" id="SSF100920">
    <property type="entry name" value="Heat shock protein 70kD (HSP70), peptide-binding domain"/>
    <property type="match status" value="1"/>
</dbReference>
<dbReference type="PROSITE" id="PS00297">
    <property type="entry name" value="HSP70_1"/>
    <property type="match status" value="1"/>
</dbReference>
<dbReference type="PROSITE" id="PS00329">
    <property type="entry name" value="HSP70_2"/>
    <property type="match status" value="1"/>
</dbReference>
<dbReference type="PROSITE" id="PS01036">
    <property type="entry name" value="HSP70_3"/>
    <property type="match status" value="1"/>
</dbReference>
<reference key="1">
    <citation type="journal article" date="2005" name="BMC Genomics">
        <title>Bacterial genome adaptation to niches: divergence of the potential virulence genes in three Burkholderia species of different survival strategies.</title>
        <authorList>
            <person name="Kim H.S."/>
            <person name="Schell M.A."/>
            <person name="Yu Y."/>
            <person name="Ulrich R.L."/>
            <person name="Sarria S.H."/>
            <person name="Nierman W.C."/>
            <person name="DeShazer D."/>
        </authorList>
    </citation>
    <scope>NUCLEOTIDE SEQUENCE [LARGE SCALE GENOMIC DNA]</scope>
    <source>
        <strain>ATCC 700388 / DSM 13276 / CCUG 48851 / CIP 106301 / E264</strain>
    </source>
</reference>
<gene>
    <name evidence="1" type="primary">dnaK</name>
    <name type="ordered locus">BTH_I1308</name>
</gene>
<name>DNAK_BURTA</name>
<feature type="chain" id="PRO_1000059525" description="Chaperone protein DnaK">
    <location>
        <begin position="1"/>
        <end position="650"/>
    </location>
</feature>
<feature type="region of interest" description="Disordered" evidence="2">
    <location>
        <begin position="613"/>
        <end position="637"/>
    </location>
</feature>
<feature type="compositionally biased region" description="Low complexity" evidence="2">
    <location>
        <begin position="613"/>
        <end position="634"/>
    </location>
</feature>
<feature type="modified residue" description="Phosphothreonine; by autocatalysis" evidence="1">
    <location>
        <position position="200"/>
    </location>
</feature>
<proteinExistence type="inferred from homology"/>
<protein>
    <recommendedName>
        <fullName evidence="1">Chaperone protein DnaK</fullName>
    </recommendedName>
    <alternativeName>
        <fullName evidence="1">HSP70</fullName>
    </alternativeName>
    <alternativeName>
        <fullName evidence="1">Heat shock 70 kDa protein</fullName>
    </alternativeName>
    <alternativeName>
        <fullName evidence="1">Heat shock protein 70</fullName>
    </alternativeName>
</protein>